<proteinExistence type="inferred from homology"/>
<dbReference type="EC" id="1.17.1.8" evidence="1"/>
<dbReference type="EMBL" id="CP000033">
    <property type="protein sequence ID" value="AAV42716.1"/>
    <property type="molecule type" value="Genomic_DNA"/>
</dbReference>
<dbReference type="RefSeq" id="YP_193747.1">
    <property type="nucleotide sequence ID" value="NC_006814.3"/>
</dbReference>
<dbReference type="SMR" id="Q5FKQ8"/>
<dbReference type="STRING" id="272621.LBA0855"/>
<dbReference type="KEGG" id="lac:LBA0855"/>
<dbReference type="PATRIC" id="fig|272621.13.peg.817"/>
<dbReference type="eggNOG" id="COG0289">
    <property type="taxonomic scope" value="Bacteria"/>
</dbReference>
<dbReference type="HOGENOM" id="CLU_047479_0_1_9"/>
<dbReference type="OrthoDB" id="9790352at2"/>
<dbReference type="BioCyc" id="LACI272621:G1G49-866-MONOMER"/>
<dbReference type="UniPathway" id="UPA00034">
    <property type="reaction ID" value="UER00018"/>
</dbReference>
<dbReference type="Proteomes" id="UP000006381">
    <property type="component" value="Chromosome"/>
</dbReference>
<dbReference type="GO" id="GO:0005829">
    <property type="term" value="C:cytosol"/>
    <property type="evidence" value="ECO:0007669"/>
    <property type="project" value="TreeGrafter"/>
</dbReference>
<dbReference type="GO" id="GO:0008839">
    <property type="term" value="F:4-hydroxy-tetrahydrodipicolinate reductase"/>
    <property type="evidence" value="ECO:0007669"/>
    <property type="project" value="UniProtKB-EC"/>
</dbReference>
<dbReference type="GO" id="GO:0051287">
    <property type="term" value="F:NAD binding"/>
    <property type="evidence" value="ECO:0007669"/>
    <property type="project" value="UniProtKB-UniRule"/>
</dbReference>
<dbReference type="GO" id="GO:0050661">
    <property type="term" value="F:NADP binding"/>
    <property type="evidence" value="ECO:0007669"/>
    <property type="project" value="UniProtKB-UniRule"/>
</dbReference>
<dbReference type="GO" id="GO:0016726">
    <property type="term" value="F:oxidoreductase activity, acting on CH or CH2 groups, NAD or NADP as acceptor"/>
    <property type="evidence" value="ECO:0007669"/>
    <property type="project" value="UniProtKB-UniRule"/>
</dbReference>
<dbReference type="GO" id="GO:0019877">
    <property type="term" value="P:diaminopimelate biosynthetic process"/>
    <property type="evidence" value="ECO:0007669"/>
    <property type="project" value="UniProtKB-UniRule"/>
</dbReference>
<dbReference type="GO" id="GO:0009089">
    <property type="term" value="P:lysine biosynthetic process via diaminopimelate"/>
    <property type="evidence" value="ECO:0007669"/>
    <property type="project" value="UniProtKB-UniRule"/>
</dbReference>
<dbReference type="CDD" id="cd02274">
    <property type="entry name" value="DHDPR_N"/>
    <property type="match status" value="1"/>
</dbReference>
<dbReference type="FunFam" id="3.30.360.10:FF:000009">
    <property type="entry name" value="4-hydroxy-tetrahydrodipicolinate reductase"/>
    <property type="match status" value="1"/>
</dbReference>
<dbReference type="Gene3D" id="3.30.360.10">
    <property type="entry name" value="Dihydrodipicolinate Reductase, domain 2"/>
    <property type="match status" value="1"/>
</dbReference>
<dbReference type="Gene3D" id="3.40.50.720">
    <property type="entry name" value="NAD(P)-binding Rossmann-like Domain"/>
    <property type="match status" value="1"/>
</dbReference>
<dbReference type="HAMAP" id="MF_00102">
    <property type="entry name" value="DapB"/>
    <property type="match status" value="1"/>
</dbReference>
<dbReference type="InterPro" id="IPR022663">
    <property type="entry name" value="DapB_C"/>
</dbReference>
<dbReference type="InterPro" id="IPR000846">
    <property type="entry name" value="DapB_N"/>
</dbReference>
<dbReference type="InterPro" id="IPR022664">
    <property type="entry name" value="DapB_N_CS"/>
</dbReference>
<dbReference type="InterPro" id="IPR023940">
    <property type="entry name" value="DHDPR_bac"/>
</dbReference>
<dbReference type="InterPro" id="IPR036291">
    <property type="entry name" value="NAD(P)-bd_dom_sf"/>
</dbReference>
<dbReference type="NCBIfam" id="TIGR00036">
    <property type="entry name" value="dapB"/>
    <property type="match status" value="1"/>
</dbReference>
<dbReference type="PANTHER" id="PTHR20836:SF0">
    <property type="entry name" value="4-HYDROXY-TETRAHYDRODIPICOLINATE REDUCTASE 1, CHLOROPLASTIC-RELATED"/>
    <property type="match status" value="1"/>
</dbReference>
<dbReference type="PANTHER" id="PTHR20836">
    <property type="entry name" value="DIHYDRODIPICOLINATE REDUCTASE"/>
    <property type="match status" value="1"/>
</dbReference>
<dbReference type="Pfam" id="PF05173">
    <property type="entry name" value="DapB_C"/>
    <property type="match status" value="1"/>
</dbReference>
<dbReference type="Pfam" id="PF01113">
    <property type="entry name" value="DapB_N"/>
    <property type="match status" value="1"/>
</dbReference>
<dbReference type="PIRSF" id="PIRSF000161">
    <property type="entry name" value="DHPR"/>
    <property type="match status" value="1"/>
</dbReference>
<dbReference type="SUPFAM" id="SSF55347">
    <property type="entry name" value="Glyceraldehyde-3-phosphate dehydrogenase-like, C-terminal domain"/>
    <property type="match status" value="1"/>
</dbReference>
<dbReference type="SUPFAM" id="SSF51735">
    <property type="entry name" value="NAD(P)-binding Rossmann-fold domains"/>
    <property type="match status" value="1"/>
</dbReference>
<dbReference type="PROSITE" id="PS01298">
    <property type="entry name" value="DAPB"/>
    <property type="match status" value="1"/>
</dbReference>
<name>DAPB_LACAC</name>
<accession>Q5FKQ8</accession>
<feature type="chain" id="PRO_0000228357" description="4-hydroxy-tetrahydrodipicolinate reductase">
    <location>
        <begin position="1"/>
        <end position="261"/>
    </location>
</feature>
<feature type="active site" description="Proton donor/acceptor" evidence="1">
    <location>
        <position position="152"/>
    </location>
</feature>
<feature type="active site" description="Proton donor" evidence="1">
    <location>
        <position position="156"/>
    </location>
</feature>
<feature type="binding site" evidence="1">
    <location>
        <begin position="11"/>
        <end position="16"/>
    </location>
    <ligand>
        <name>NAD(+)</name>
        <dbReference type="ChEBI" id="CHEBI:57540"/>
    </ligand>
</feature>
<feature type="binding site" evidence="1">
    <location>
        <begin position="96"/>
        <end position="98"/>
    </location>
    <ligand>
        <name>NAD(+)</name>
        <dbReference type="ChEBI" id="CHEBI:57540"/>
    </ligand>
</feature>
<feature type="binding site" evidence="1">
    <location>
        <begin position="122"/>
        <end position="125"/>
    </location>
    <ligand>
        <name>NAD(+)</name>
        <dbReference type="ChEBI" id="CHEBI:57540"/>
    </ligand>
</feature>
<feature type="binding site" evidence="1">
    <location>
        <position position="153"/>
    </location>
    <ligand>
        <name>(S)-2,3,4,5-tetrahydrodipicolinate</name>
        <dbReference type="ChEBI" id="CHEBI:16845"/>
    </ligand>
</feature>
<feature type="binding site" evidence="1">
    <location>
        <begin position="162"/>
        <end position="163"/>
    </location>
    <ligand>
        <name>(S)-2,3,4,5-tetrahydrodipicolinate</name>
        <dbReference type="ChEBI" id="CHEBI:16845"/>
    </ligand>
</feature>
<keyword id="KW-0028">Amino-acid biosynthesis</keyword>
<keyword id="KW-0963">Cytoplasm</keyword>
<keyword id="KW-0220">Diaminopimelate biosynthesis</keyword>
<keyword id="KW-0457">Lysine biosynthesis</keyword>
<keyword id="KW-0520">NAD</keyword>
<keyword id="KW-0521">NADP</keyword>
<keyword id="KW-0560">Oxidoreductase</keyword>
<keyword id="KW-1185">Reference proteome</keyword>
<sequence>MRMTKRVLIAGFTGAMGQKAVNLVNSLSDFKIVAGLSPSAENDPQKYNLPEDAQIFNSLDEIPDNLTDIWIDFTLPKAVYNNVKFALTHHISPIVGTTGLSDGQEAELIEISKEEKVGGIIAPNFGISAVLLMKFAKEAAKYFPDVEIIEMHHADKKDAPSGTALATAKMIAENRPAHQTAPDEVETLENVRGGDYEGIKIHSVRLPGYVAHEQVLFGGTGEALTIRQDSFDRQSFMSGVKVALEKVDQLNELVVGLENIL</sequence>
<comment type="function">
    <text evidence="1">Catalyzes the conversion of 4-hydroxy-tetrahydrodipicolinate (HTPA) to tetrahydrodipicolinate.</text>
</comment>
<comment type="catalytic activity">
    <reaction evidence="1">
        <text>(S)-2,3,4,5-tetrahydrodipicolinate + NAD(+) + H2O = (2S,4S)-4-hydroxy-2,3,4,5-tetrahydrodipicolinate + NADH + H(+)</text>
        <dbReference type="Rhea" id="RHEA:35323"/>
        <dbReference type="ChEBI" id="CHEBI:15377"/>
        <dbReference type="ChEBI" id="CHEBI:15378"/>
        <dbReference type="ChEBI" id="CHEBI:16845"/>
        <dbReference type="ChEBI" id="CHEBI:57540"/>
        <dbReference type="ChEBI" id="CHEBI:57945"/>
        <dbReference type="ChEBI" id="CHEBI:67139"/>
        <dbReference type="EC" id="1.17.1.8"/>
    </reaction>
</comment>
<comment type="catalytic activity">
    <reaction evidence="1">
        <text>(S)-2,3,4,5-tetrahydrodipicolinate + NADP(+) + H2O = (2S,4S)-4-hydroxy-2,3,4,5-tetrahydrodipicolinate + NADPH + H(+)</text>
        <dbReference type="Rhea" id="RHEA:35331"/>
        <dbReference type="ChEBI" id="CHEBI:15377"/>
        <dbReference type="ChEBI" id="CHEBI:15378"/>
        <dbReference type="ChEBI" id="CHEBI:16845"/>
        <dbReference type="ChEBI" id="CHEBI:57783"/>
        <dbReference type="ChEBI" id="CHEBI:58349"/>
        <dbReference type="ChEBI" id="CHEBI:67139"/>
        <dbReference type="EC" id="1.17.1.8"/>
    </reaction>
</comment>
<comment type="pathway">
    <text evidence="1">Amino-acid biosynthesis; L-lysine biosynthesis via DAP pathway; (S)-tetrahydrodipicolinate from L-aspartate: step 4/4.</text>
</comment>
<comment type="subcellular location">
    <subcellularLocation>
        <location evidence="1">Cytoplasm</location>
    </subcellularLocation>
</comment>
<comment type="similarity">
    <text evidence="1">Belongs to the DapB family.</text>
</comment>
<comment type="caution">
    <text evidence="2">Was originally thought to be a dihydrodipicolinate reductase (DHDPR), catalyzing the conversion of dihydrodipicolinate to tetrahydrodipicolinate. However, it was shown in E.coli that the substrate of the enzymatic reaction is not dihydrodipicolinate (DHDP) but in fact (2S,4S)-4-hydroxy-2,3,4,5-tetrahydrodipicolinic acid (HTPA), the product released by the DapA-catalyzed reaction.</text>
</comment>
<gene>
    <name evidence="1" type="primary">dapB</name>
    <name type="ordered locus">LBA0855</name>
</gene>
<protein>
    <recommendedName>
        <fullName evidence="1">4-hydroxy-tetrahydrodipicolinate reductase</fullName>
        <shortName evidence="1">HTPA reductase</shortName>
        <ecNumber evidence="1">1.17.1.8</ecNumber>
    </recommendedName>
</protein>
<evidence type="ECO:0000255" key="1">
    <source>
        <dbReference type="HAMAP-Rule" id="MF_00102"/>
    </source>
</evidence>
<evidence type="ECO:0000305" key="2"/>
<organism>
    <name type="scientific">Lactobacillus acidophilus (strain ATCC 700396 / NCK56 / N2 / NCFM)</name>
    <dbReference type="NCBI Taxonomy" id="272621"/>
    <lineage>
        <taxon>Bacteria</taxon>
        <taxon>Bacillati</taxon>
        <taxon>Bacillota</taxon>
        <taxon>Bacilli</taxon>
        <taxon>Lactobacillales</taxon>
        <taxon>Lactobacillaceae</taxon>
        <taxon>Lactobacillus</taxon>
    </lineage>
</organism>
<reference key="1">
    <citation type="journal article" date="2005" name="Proc. Natl. Acad. Sci. U.S.A.">
        <title>Complete genome sequence of the probiotic lactic acid bacterium Lactobacillus acidophilus NCFM.</title>
        <authorList>
            <person name="Altermann E."/>
            <person name="Russell W.M."/>
            <person name="Azcarate-Peril M.A."/>
            <person name="Barrangou R."/>
            <person name="Buck B.L."/>
            <person name="McAuliffe O."/>
            <person name="Souther N."/>
            <person name="Dobson A."/>
            <person name="Duong T."/>
            <person name="Callanan M."/>
            <person name="Lick S."/>
            <person name="Hamrick A."/>
            <person name="Cano R."/>
            <person name="Klaenhammer T.R."/>
        </authorList>
    </citation>
    <scope>NUCLEOTIDE SEQUENCE [LARGE SCALE GENOMIC DNA]</scope>
    <source>
        <strain>ATCC 700396 / NCK56 / N2 / NCFM</strain>
    </source>
</reference>